<proteinExistence type="inferred from homology"/>
<gene>
    <name type="ORF">SPAC5H10.05c</name>
</gene>
<accession>Q09677</accession>
<sequence>MKILLINGAQEFAHSQGKFNKTLHNVAKDTLIQLGHTVQETVVDEGYDENTEVEKILWANVIIYQWPGWWMGTPWKLKRYMDEVFTAGYGQLYANDGRSSKNPTQNYGKGGLLHEHRYMISCTWNAPAAAFEEVGNFFDGRGVDGTLLTFHKANQFLGMKPLPTFMVNDVIKNPKVDIAVCAYKDHLNDVFGSANA</sequence>
<dbReference type="EMBL" id="CU329670">
    <property type="protein sequence ID" value="CAA89955.1"/>
    <property type="molecule type" value="Genomic_DNA"/>
</dbReference>
<dbReference type="PIR" id="S55483">
    <property type="entry name" value="S55483"/>
</dbReference>
<dbReference type="RefSeq" id="NP_592818.1">
    <property type="nucleotide sequence ID" value="NM_001018218.2"/>
</dbReference>
<dbReference type="SMR" id="Q09677"/>
<dbReference type="BioGRID" id="279075">
    <property type="interactions" value="8"/>
</dbReference>
<dbReference type="iPTMnet" id="Q09677"/>
<dbReference type="PaxDb" id="4896-SPAC5H10.05c.1"/>
<dbReference type="EnsemblFungi" id="SPAC5H10.05c.1">
    <property type="protein sequence ID" value="SPAC5H10.05c.1:pep"/>
    <property type="gene ID" value="SPAC5H10.05c"/>
</dbReference>
<dbReference type="KEGG" id="spo:2542621"/>
<dbReference type="PomBase" id="SPAC5H10.05c"/>
<dbReference type="VEuPathDB" id="FungiDB:SPAC5H10.05c"/>
<dbReference type="eggNOG" id="ENOG502RXUH">
    <property type="taxonomic scope" value="Eukaryota"/>
</dbReference>
<dbReference type="HOGENOM" id="CLU_083846_0_0_1"/>
<dbReference type="InParanoid" id="Q09677"/>
<dbReference type="OMA" id="PTFICND"/>
<dbReference type="PhylomeDB" id="Q09677"/>
<dbReference type="PRO" id="PR:Q09677"/>
<dbReference type="Proteomes" id="UP000002485">
    <property type="component" value="Chromosome I"/>
</dbReference>
<dbReference type="GO" id="GO:0005829">
    <property type="term" value="C:cytosol"/>
    <property type="evidence" value="ECO:0007005"/>
    <property type="project" value="PomBase"/>
</dbReference>
<dbReference type="GO" id="GO:0005634">
    <property type="term" value="C:nucleus"/>
    <property type="evidence" value="ECO:0007005"/>
    <property type="project" value="PomBase"/>
</dbReference>
<dbReference type="GO" id="GO:0003824">
    <property type="term" value="F:catalytic activity"/>
    <property type="evidence" value="ECO:0000255"/>
    <property type="project" value="PomBase"/>
</dbReference>
<dbReference type="GO" id="GO:0050660">
    <property type="term" value="F:flavin adenine dinucleotide binding"/>
    <property type="evidence" value="ECO:0000255"/>
    <property type="project" value="PomBase"/>
</dbReference>
<dbReference type="Gene3D" id="3.40.50.360">
    <property type="match status" value="1"/>
</dbReference>
<dbReference type="InterPro" id="IPR003680">
    <property type="entry name" value="Flavodoxin_fold"/>
</dbReference>
<dbReference type="InterPro" id="IPR029039">
    <property type="entry name" value="Flavoprotein-like_sf"/>
</dbReference>
<dbReference type="InterPro" id="IPR052397">
    <property type="entry name" value="NADPH-QR_MdaB"/>
</dbReference>
<dbReference type="PANTHER" id="PTHR46305">
    <property type="match status" value="1"/>
</dbReference>
<dbReference type="PANTHER" id="PTHR46305:SF3">
    <property type="entry name" value="NADPH:QUINONE OXIDOREDUCTASE MDAB"/>
    <property type="match status" value="1"/>
</dbReference>
<dbReference type="Pfam" id="PF02525">
    <property type="entry name" value="Flavodoxin_2"/>
    <property type="match status" value="1"/>
</dbReference>
<dbReference type="SUPFAM" id="SSF52218">
    <property type="entry name" value="Flavoproteins"/>
    <property type="match status" value="1"/>
</dbReference>
<comment type="cofactor">
    <cofactor evidence="1">
        <name>FAD</name>
        <dbReference type="ChEBI" id="CHEBI:57692"/>
    </cofactor>
</comment>
<comment type="similarity">
    <text evidence="3">Belongs to the oxidoreductase MdaB family.</text>
</comment>
<organism>
    <name type="scientific">Schizosaccharomyces pombe (strain 972 / ATCC 24843)</name>
    <name type="common">Fission yeast</name>
    <dbReference type="NCBI Taxonomy" id="284812"/>
    <lineage>
        <taxon>Eukaryota</taxon>
        <taxon>Fungi</taxon>
        <taxon>Dikarya</taxon>
        <taxon>Ascomycota</taxon>
        <taxon>Taphrinomycotina</taxon>
        <taxon>Schizosaccharomycetes</taxon>
        <taxon>Schizosaccharomycetales</taxon>
        <taxon>Schizosaccharomycetaceae</taxon>
        <taxon>Schizosaccharomyces</taxon>
    </lineage>
</organism>
<reference key="1">
    <citation type="journal article" date="2002" name="Nature">
        <title>The genome sequence of Schizosaccharomyces pombe.</title>
        <authorList>
            <person name="Wood V."/>
            <person name="Gwilliam R."/>
            <person name="Rajandream M.A."/>
            <person name="Lyne M.H."/>
            <person name="Lyne R."/>
            <person name="Stewart A."/>
            <person name="Sgouros J.G."/>
            <person name="Peat N."/>
            <person name="Hayles J."/>
            <person name="Baker S.G."/>
            <person name="Basham D."/>
            <person name="Bowman S."/>
            <person name="Brooks K."/>
            <person name="Brown D."/>
            <person name="Brown S."/>
            <person name="Chillingworth T."/>
            <person name="Churcher C.M."/>
            <person name="Collins M."/>
            <person name="Connor R."/>
            <person name="Cronin A."/>
            <person name="Davis P."/>
            <person name="Feltwell T."/>
            <person name="Fraser A."/>
            <person name="Gentles S."/>
            <person name="Goble A."/>
            <person name="Hamlin N."/>
            <person name="Harris D.E."/>
            <person name="Hidalgo J."/>
            <person name="Hodgson G."/>
            <person name="Holroyd S."/>
            <person name="Hornsby T."/>
            <person name="Howarth S."/>
            <person name="Huckle E.J."/>
            <person name="Hunt S."/>
            <person name="Jagels K."/>
            <person name="James K.D."/>
            <person name="Jones L."/>
            <person name="Jones M."/>
            <person name="Leather S."/>
            <person name="McDonald S."/>
            <person name="McLean J."/>
            <person name="Mooney P."/>
            <person name="Moule S."/>
            <person name="Mungall K.L."/>
            <person name="Murphy L.D."/>
            <person name="Niblett D."/>
            <person name="Odell C."/>
            <person name="Oliver K."/>
            <person name="O'Neil S."/>
            <person name="Pearson D."/>
            <person name="Quail M.A."/>
            <person name="Rabbinowitsch E."/>
            <person name="Rutherford K.M."/>
            <person name="Rutter S."/>
            <person name="Saunders D."/>
            <person name="Seeger K."/>
            <person name="Sharp S."/>
            <person name="Skelton J."/>
            <person name="Simmonds M.N."/>
            <person name="Squares R."/>
            <person name="Squares S."/>
            <person name="Stevens K."/>
            <person name="Taylor K."/>
            <person name="Taylor R.G."/>
            <person name="Tivey A."/>
            <person name="Walsh S.V."/>
            <person name="Warren T."/>
            <person name="Whitehead S."/>
            <person name="Woodward J.R."/>
            <person name="Volckaert G."/>
            <person name="Aert R."/>
            <person name="Robben J."/>
            <person name="Grymonprez B."/>
            <person name="Weltjens I."/>
            <person name="Vanstreels E."/>
            <person name="Rieger M."/>
            <person name="Schaefer M."/>
            <person name="Mueller-Auer S."/>
            <person name="Gabel C."/>
            <person name="Fuchs M."/>
            <person name="Duesterhoeft A."/>
            <person name="Fritzc C."/>
            <person name="Holzer E."/>
            <person name="Moestl D."/>
            <person name="Hilbert H."/>
            <person name="Borzym K."/>
            <person name="Langer I."/>
            <person name="Beck A."/>
            <person name="Lehrach H."/>
            <person name="Reinhardt R."/>
            <person name="Pohl T.M."/>
            <person name="Eger P."/>
            <person name="Zimmermann W."/>
            <person name="Wedler H."/>
            <person name="Wambutt R."/>
            <person name="Purnelle B."/>
            <person name="Goffeau A."/>
            <person name="Cadieu E."/>
            <person name="Dreano S."/>
            <person name="Gloux S."/>
            <person name="Lelaure V."/>
            <person name="Mottier S."/>
            <person name="Galibert F."/>
            <person name="Aves S.J."/>
            <person name="Xiang Z."/>
            <person name="Hunt C."/>
            <person name="Moore K."/>
            <person name="Hurst S.M."/>
            <person name="Lucas M."/>
            <person name="Rochet M."/>
            <person name="Gaillardin C."/>
            <person name="Tallada V.A."/>
            <person name="Garzon A."/>
            <person name="Thode G."/>
            <person name="Daga R.R."/>
            <person name="Cruzado L."/>
            <person name="Jimenez J."/>
            <person name="Sanchez M."/>
            <person name="del Rey F."/>
            <person name="Benito J."/>
            <person name="Dominguez A."/>
            <person name="Revuelta J.L."/>
            <person name="Moreno S."/>
            <person name="Armstrong J."/>
            <person name="Forsburg S.L."/>
            <person name="Cerutti L."/>
            <person name="Lowe T."/>
            <person name="McCombie W.R."/>
            <person name="Paulsen I."/>
            <person name="Potashkin J."/>
            <person name="Shpakovski G.V."/>
            <person name="Ussery D."/>
            <person name="Barrell B.G."/>
            <person name="Nurse P."/>
        </authorList>
    </citation>
    <scope>NUCLEOTIDE SEQUENCE [LARGE SCALE GENOMIC DNA]</scope>
    <source>
        <strain>972 / ATCC 24843</strain>
    </source>
</reference>
<name>YA05_SCHPO</name>
<keyword id="KW-0274">FAD</keyword>
<keyword id="KW-0285">Flavoprotein</keyword>
<keyword id="KW-1185">Reference proteome</keyword>
<feature type="chain" id="PRO_0000116379" description="Uncharacterized protein C5H10.05c">
    <location>
        <begin position="1"/>
        <end position="196"/>
    </location>
</feature>
<feature type="binding site" evidence="2">
    <location>
        <begin position="15"/>
        <end position="22"/>
    </location>
    <ligand>
        <name>FAD</name>
        <dbReference type="ChEBI" id="CHEBI:57692"/>
    </ligand>
</feature>
<feature type="binding site" evidence="2">
    <location>
        <begin position="68"/>
        <end position="71"/>
    </location>
    <ligand>
        <name>FAD</name>
        <dbReference type="ChEBI" id="CHEBI:57692"/>
    </ligand>
</feature>
<feature type="binding site" evidence="2">
    <location>
        <position position="107"/>
    </location>
    <ligand>
        <name>FAD</name>
        <dbReference type="ChEBI" id="CHEBI:57692"/>
    </ligand>
</feature>
<feature type="binding site" evidence="2">
    <location>
        <begin position="123"/>
        <end position="126"/>
    </location>
    <ligand>
        <name>FAD</name>
        <dbReference type="ChEBI" id="CHEBI:57692"/>
    </ligand>
</feature>
<evidence type="ECO:0000250" key="1">
    <source>
        <dbReference type="UniProtKB" id="P0AEY5"/>
    </source>
</evidence>
<evidence type="ECO:0000250" key="2">
    <source>
        <dbReference type="UniProtKB" id="P0AEY7"/>
    </source>
</evidence>
<evidence type="ECO:0000305" key="3"/>
<protein>
    <recommendedName>
        <fullName>Uncharacterized protein C5H10.05c</fullName>
    </recommendedName>
</protein>